<reference key="1">
    <citation type="journal article" date="2014" name="Stand. Genomic Sci.">
        <title>Complete genome sequence of Anabaena variabilis ATCC 29413.</title>
        <authorList>
            <person name="Thiel T."/>
            <person name="Pratte B.S."/>
            <person name="Zhong J."/>
            <person name="Goodwin L."/>
            <person name="Copeland A."/>
            <person name="Lucas S."/>
            <person name="Han C."/>
            <person name="Pitluck S."/>
            <person name="Land M.L."/>
            <person name="Kyrpides N.C."/>
            <person name="Woyke T."/>
        </authorList>
    </citation>
    <scope>NUCLEOTIDE SEQUENCE [LARGE SCALE GENOMIC DNA]</scope>
    <source>
        <strain>ATCC 29413 / PCC 7937</strain>
    </source>
</reference>
<keyword id="KW-0169">Cobalamin biosynthesis</keyword>
<keyword id="KW-0315">Glutamine amidotransferase</keyword>
<comment type="function">
    <text evidence="1">Catalyzes amidations at positions B, D, E, and G on adenosylcobyrinic A,C-diamide. NH(2) groups are provided by glutamine, and one molecule of ATP is hydrogenolyzed for each amidation.</text>
</comment>
<comment type="pathway">
    <text evidence="1">Cofactor biosynthesis; adenosylcobalamin biosynthesis.</text>
</comment>
<comment type="similarity">
    <text evidence="1">Belongs to the CobB/CobQ family. CobQ subfamily.</text>
</comment>
<dbReference type="EMBL" id="CP000117">
    <property type="protein sequence ID" value="ABA19822.1"/>
    <property type="molecule type" value="Genomic_DNA"/>
</dbReference>
<dbReference type="SMR" id="Q3MGR4"/>
<dbReference type="STRING" id="240292.Ava_0196"/>
<dbReference type="KEGG" id="ava:Ava_0196"/>
<dbReference type="eggNOG" id="COG1492">
    <property type="taxonomic scope" value="Bacteria"/>
</dbReference>
<dbReference type="HOGENOM" id="CLU_019250_2_2_3"/>
<dbReference type="UniPathway" id="UPA00148"/>
<dbReference type="Proteomes" id="UP000002533">
    <property type="component" value="Chromosome"/>
</dbReference>
<dbReference type="GO" id="GO:0015420">
    <property type="term" value="F:ABC-type vitamin B12 transporter activity"/>
    <property type="evidence" value="ECO:0007669"/>
    <property type="project" value="UniProtKB-UniRule"/>
</dbReference>
<dbReference type="GO" id="GO:0003824">
    <property type="term" value="F:catalytic activity"/>
    <property type="evidence" value="ECO:0007669"/>
    <property type="project" value="InterPro"/>
</dbReference>
<dbReference type="GO" id="GO:0009236">
    <property type="term" value="P:cobalamin biosynthetic process"/>
    <property type="evidence" value="ECO:0007669"/>
    <property type="project" value="UniProtKB-UniRule"/>
</dbReference>
<dbReference type="CDD" id="cd05389">
    <property type="entry name" value="CobQ_N"/>
    <property type="match status" value="1"/>
</dbReference>
<dbReference type="CDD" id="cd01750">
    <property type="entry name" value="GATase1_CobQ"/>
    <property type="match status" value="1"/>
</dbReference>
<dbReference type="Gene3D" id="3.40.50.880">
    <property type="match status" value="1"/>
</dbReference>
<dbReference type="Gene3D" id="3.40.50.300">
    <property type="entry name" value="P-loop containing nucleotide triphosphate hydrolases"/>
    <property type="match status" value="1"/>
</dbReference>
<dbReference type="HAMAP" id="MF_00028">
    <property type="entry name" value="CobQ"/>
    <property type="match status" value="1"/>
</dbReference>
<dbReference type="InterPro" id="IPR029062">
    <property type="entry name" value="Class_I_gatase-like"/>
</dbReference>
<dbReference type="InterPro" id="IPR002586">
    <property type="entry name" value="CobQ/CobB/MinD/ParA_Nub-bd_dom"/>
</dbReference>
<dbReference type="InterPro" id="IPR033949">
    <property type="entry name" value="CobQ_GATase1"/>
</dbReference>
<dbReference type="InterPro" id="IPR047045">
    <property type="entry name" value="CobQ_N"/>
</dbReference>
<dbReference type="InterPro" id="IPR004459">
    <property type="entry name" value="CobQ_synth"/>
</dbReference>
<dbReference type="InterPro" id="IPR011698">
    <property type="entry name" value="GATase_3"/>
</dbReference>
<dbReference type="InterPro" id="IPR027417">
    <property type="entry name" value="P-loop_NTPase"/>
</dbReference>
<dbReference type="NCBIfam" id="TIGR00313">
    <property type="entry name" value="cobQ"/>
    <property type="match status" value="1"/>
</dbReference>
<dbReference type="NCBIfam" id="NF001989">
    <property type="entry name" value="PRK00784.1"/>
    <property type="match status" value="1"/>
</dbReference>
<dbReference type="PANTHER" id="PTHR21343:SF1">
    <property type="entry name" value="COBYRIC ACID SYNTHASE"/>
    <property type="match status" value="1"/>
</dbReference>
<dbReference type="PANTHER" id="PTHR21343">
    <property type="entry name" value="DETHIOBIOTIN SYNTHETASE"/>
    <property type="match status" value="1"/>
</dbReference>
<dbReference type="Pfam" id="PF01656">
    <property type="entry name" value="CbiA"/>
    <property type="match status" value="1"/>
</dbReference>
<dbReference type="Pfam" id="PF07685">
    <property type="entry name" value="GATase_3"/>
    <property type="match status" value="1"/>
</dbReference>
<dbReference type="SUPFAM" id="SSF52317">
    <property type="entry name" value="Class I glutamine amidotransferase-like"/>
    <property type="match status" value="1"/>
</dbReference>
<dbReference type="SUPFAM" id="SSF52540">
    <property type="entry name" value="P-loop containing nucleoside triphosphate hydrolases"/>
    <property type="match status" value="1"/>
</dbReference>
<dbReference type="PROSITE" id="PS51274">
    <property type="entry name" value="GATASE_COBBQ"/>
    <property type="match status" value="1"/>
</dbReference>
<proteinExistence type="inferred from homology"/>
<organism>
    <name type="scientific">Trichormus variabilis (strain ATCC 29413 / PCC 7937)</name>
    <name type="common">Anabaena variabilis</name>
    <dbReference type="NCBI Taxonomy" id="240292"/>
    <lineage>
        <taxon>Bacteria</taxon>
        <taxon>Bacillati</taxon>
        <taxon>Cyanobacteriota</taxon>
        <taxon>Cyanophyceae</taxon>
        <taxon>Nostocales</taxon>
        <taxon>Nostocaceae</taxon>
        <taxon>Trichormus</taxon>
    </lineage>
</organism>
<sequence length="491" mass="54176">MKSIMVVGTTSHAGKSLISTAICRILSRRGWRVAPFKGQNMALNAYVTANGGEIGYAQAVQAWAAGVVPWVEMNPILLKPQGDMTSQVIIRGRPVGRVNAADYYEQYFEPGWRAIEESLQHLGTEFDLVVCEGAGSPAEINLKHRDLTNMRVAKYLNAPTLLVVDIDRGGAFAHVVGTLELLEPEERQLIKGVVINKFRGQRSLLDPGIKWLEERTGIPVVGVIPYLQEIFPAEDSLDLLERKTHKAHADLQITVVRLPRIANFTDFDPLESEPTVAVKYISPKQDLGHPDAVILPGTKTTIADLILLQKTGMAEAIQNYAASGGTVLGICGGYQILGQMIADPEGIEGQAGRYQGLNLLPIRTVITGQKIARQRQVSSNFPQLGLPVNGFEIHQGRSRVEPQGDSQAFQPLFDDVNLGLVDSCQSVWGSYLHGLFDNGPWRRAWLNRLRQQRGLKSLPTGVANYREQREQMLDNIATEVENHLDLTLFLP</sequence>
<gene>
    <name evidence="1" type="primary">cobQ</name>
    <name type="ordered locus">Ava_0196</name>
</gene>
<protein>
    <recommendedName>
        <fullName evidence="1">Cobyric acid synthase</fullName>
    </recommendedName>
</protein>
<name>COBQ_TRIV2</name>
<feature type="chain" id="PRO_0000332321" description="Cobyric acid synthase">
    <location>
        <begin position="1"/>
        <end position="491"/>
    </location>
</feature>
<feature type="domain" description="GATase cobBQ-type" evidence="1">
    <location>
        <begin position="250"/>
        <end position="441"/>
    </location>
</feature>
<feature type="active site" description="Nucleophile" evidence="1">
    <location>
        <position position="331"/>
    </location>
</feature>
<feature type="active site" evidence="1">
    <location>
        <position position="433"/>
    </location>
</feature>
<accession>Q3MGR4</accession>
<evidence type="ECO:0000255" key="1">
    <source>
        <dbReference type="HAMAP-Rule" id="MF_00028"/>
    </source>
</evidence>